<evidence type="ECO:0000255" key="1">
    <source>
        <dbReference type="HAMAP-Rule" id="MF_01838"/>
    </source>
</evidence>
<name>FABV_CLOPE</name>
<comment type="function">
    <text evidence="1">Involved in the fatty acid synthesis (FAS II). Catalyzes the reduction of a carbon-carbon double bond in an enoyl moiety that is covalently linked to a coenzyme A (CoA).</text>
</comment>
<comment type="catalytic activity">
    <reaction evidence="1">
        <text>a 2,3-saturated acyl-CoA + NAD(+) = a (2E)-enoyl-CoA + NADH + H(+)</text>
        <dbReference type="Rhea" id="RHEA:18177"/>
        <dbReference type="ChEBI" id="CHEBI:15378"/>
        <dbReference type="ChEBI" id="CHEBI:57540"/>
        <dbReference type="ChEBI" id="CHEBI:57945"/>
        <dbReference type="ChEBI" id="CHEBI:58856"/>
        <dbReference type="ChEBI" id="CHEBI:65111"/>
        <dbReference type="EC" id="1.3.1.44"/>
    </reaction>
</comment>
<comment type="pathway">
    <text evidence="1">Lipid metabolism; fatty acid biosynthesis.</text>
</comment>
<comment type="subunit">
    <text evidence="1">Monomer.</text>
</comment>
<comment type="similarity">
    <text evidence="1">Belongs to the TER reductase family.</text>
</comment>
<accession>Q8XIP1</accession>
<proteinExistence type="inferred from homology"/>
<protein>
    <recommendedName>
        <fullName evidence="1">Trans-2-enoyl-CoA reductase [NADH]</fullName>
        <shortName evidence="1">TER</shortName>
        <ecNumber evidence="1">1.3.1.44</ecNumber>
    </recommendedName>
</protein>
<reference key="1">
    <citation type="journal article" date="2002" name="Proc. Natl. Acad. Sci. U.S.A.">
        <title>Complete genome sequence of Clostridium perfringens, an anaerobic flesh-eater.</title>
        <authorList>
            <person name="Shimizu T."/>
            <person name="Ohtani K."/>
            <person name="Hirakawa H."/>
            <person name="Ohshima K."/>
            <person name="Yamashita A."/>
            <person name="Shiba T."/>
            <person name="Ogasawara N."/>
            <person name="Hattori M."/>
            <person name="Kuhara S."/>
            <person name="Hayashi H."/>
        </authorList>
    </citation>
    <scope>NUCLEOTIDE SEQUENCE [LARGE SCALE GENOMIC DNA]</scope>
    <source>
        <strain>13 / Type A</strain>
    </source>
</reference>
<keyword id="KW-0275">Fatty acid biosynthesis</keyword>
<keyword id="KW-0276">Fatty acid metabolism</keyword>
<keyword id="KW-0444">Lipid biosynthesis</keyword>
<keyword id="KW-0443">Lipid metabolism</keyword>
<keyword id="KW-0520">NAD</keyword>
<keyword id="KW-0560">Oxidoreductase</keyword>
<keyword id="KW-1185">Reference proteome</keyword>
<gene>
    <name evidence="1" type="primary">fabV</name>
    <name type="ordered locus">CPE2074</name>
</gene>
<organism>
    <name type="scientific">Clostridium perfringens (strain 13 / Type A)</name>
    <dbReference type="NCBI Taxonomy" id="195102"/>
    <lineage>
        <taxon>Bacteria</taxon>
        <taxon>Bacillati</taxon>
        <taxon>Bacillota</taxon>
        <taxon>Clostridia</taxon>
        <taxon>Eubacteriales</taxon>
        <taxon>Clostridiaceae</taxon>
        <taxon>Clostridium</taxon>
    </lineage>
</organism>
<sequence length="389" mass="43138">MIVEPKFRGFICTTSHPIGCKKNVENQIEYVKENGKIEGAKRVLVLGASTGYGLASAIVASEACDAEVLGVSFEREAKGKRTASAGWYNIESLKKFVEGEGKKFISVNGDAFSNEVKSEVIDLIKENMGKVDLVIYSLAAPKRKDPVSGEVYSSCLKTVGAPFTSKTLDFHTGEIQNITINPATEEEIEGTRKVMGGEDWMLWIEALKEANVLENGVKTIAYSYIGPEVTYPIYREGTIGRAKNDLEKTAGEITKVLKSLNGEGYISVNKALVTQASSAIPIVSLYISILYKVMKEKGTHEGCIEQIYRMFKELYEGNLNLDSENRIRIDDLEMAEDVQKAIEEIWPQITSENVFELSDAEDFKKEFFKLFGFGLEGVDYSEDVDITTV</sequence>
<feature type="chain" id="PRO_0000220041" description="Trans-2-enoyl-CoA reductase [NADH]">
    <location>
        <begin position="1"/>
        <end position="389"/>
    </location>
</feature>
<feature type="active site" description="Proton donor" evidence="1">
    <location>
        <position position="234"/>
    </location>
</feature>
<feature type="binding site" evidence="1">
    <location>
        <begin position="47"/>
        <end position="52"/>
    </location>
    <ligand>
        <name>NAD(+)</name>
        <dbReference type="ChEBI" id="CHEBI:57540"/>
    </ligand>
</feature>
<feature type="binding site" evidence="1">
    <location>
        <begin position="73"/>
        <end position="74"/>
    </location>
    <ligand>
        <name>NAD(+)</name>
        <dbReference type="ChEBI" id="CHEBI:57540"/>
    </ligand>
</feature>
<feature type="binding site" evidence="1">
    <location>
        <begin position="110"/>
        <end position="111"/>
    </location>
    <ligand>
        <name>NAD(+)</name>
        <dbReference type="ChEBI" id="CHEBI:57540"/>
    </ligand>
</feature>
<feature type="binding site" evidence="1">
    <location>
        <begin position="138"/>
        <end position="139"/>
    </location>
    <ligand>
        <name>NAD(+)</name>
        <dbReference type="ChEBI" id="CHEBI:57540"/>
    </ligand>
</feature>
<feature type="binding site" evidence="1">
    <location>
        <position position="224"/>
    </location>
    <ligand>
        <name>substrate</name>
    </ligand>
</feature>
<feature type="binding site" evidence="1">
    <location>
        <position position="243"/>
    </location>
    <ligand>
        <name>NAD(+)</name>
        <dbReference type="ChEBI" id="CHEBI:57540"/>
    </ligand>
</feature>
<feature type="binding site" evidence="1">
    <location>
        <begin position="272"/>
        <end position="274"/>
    </location>
    <ligand>
        <name>NAD(+)</name>
        <dbReference type="ChEBI" id="CHEBI:57540"/>
    </ligand>
</feature>
<feature type="site" description="Plays an important role in discriminating NADH against NADPH" evidence="1">
    <location>
        <position position="74"/>
    </location>
</feature>
<dbReference type="EC" id="1.3.1.44" evidence="1"/>
<dbReference type="EMBL" id="BA000016">
    <property type="protein sequence ID" value="BAB81780.1"/>
    <property type="molecule type" value="Genomic_DNA"/>
</dbReference>
<dbReference type="RefSeq" id="WP_011010749.1">
    <property type="nucleotide sequence ID" value="NC_003366.1"/>
</dbReference>
<dbReference type="SMR" id="Q8XIP1"/>
<dbReference type="STRING" id="195102.gene:10491344"/>
<dbReference type="KEGG" id="cpe:CPE2074"/>
<dbReference type="HOGENOM" id="CLU_057698_1_0_9"/>
<dbReference type="UniPathway" id="UPA00094"/>
<dbReference type="Proteomes" id="UP000000818">
    <property type="component" value="Chromosome"/>
</dbReference>
<dbReference type="GO" id="GO:0004318">
    <property type="term" value="F:enoyl-[acyl-carrier-protein] reductase (NADH) activity"/>
    <property type="evidence" value="ECO:0007669"/>
    <property type="project" value="TreeGrafter"/>
</dbReference>
<dbReference type="GO" id="GO:0051287">
    <property type="term" value="F:NAD binding"/>
    <property type="evidence" value="ECO:0007669"/>
    <property type="project" value="UniProtKB-UniRule"/>
</dbReference>
<dbReference type="GO" id="GO:0050343">
    <property type="term" value="F:trans-2-enoyl-CoA reductase (NADH) activity"/>
    <property type="evidence" value="ECO:0007669"/>
    <property type="project" value="UniProtKB-UniRule"/>
</dbReference>
<dbReference type="GO" id="GO:0006633">
    <property type="term" value="P:fatty acid biosynthetic process"/>
    <property type="evidence" value="ECO:0007669"/>
    <property type="project" value="UniProtKB-UniRule"/>
</dbReference>
<dbReference type="Gene3D" id="3.40.50.720">
    <property type="entry name" value="NAD(P)-binding Rossmann-like Domain"/>
    <property type="match status" value="1"/>
</dbReference>
<dbReference type="HAMAP" id="MF_01838">
    <property type="entry name" value="FabV_reductase"/>
    <property type="match status" value="1"/>
</dbReference>
<dbReference type="InterPro" id="IPR024906">
    <property type="entry name" value="Eno_Rdtase_FAD-bd_dom"/>
</dbReference>
<dbReference type="InterPro" id="IPR024910">
    <property type="entry name" value="Enoyl-CoA_Rdtase_cat_dom"/>
</dbReference>
<dbReference type="InterPro" id="IPR050048">
    <property type="entry name" value="FabV-like_NADH_b"/>
</dbReference>
<dbReference type="InterPro" id="IPR036291">
    <property type="entry name" value="NAD(P)-bd_dom_sf"/>
</dbReference>
<dbReference type="InterPro" id="IPR010758">
    <property type="entry name" value="Trans-2-enoyl-CoA_reductase"/>
</dbReference>
<dbReference type="NCBIfam" id="NF043048">
    <property type="entry name" value="EnoyACPredFabV"/>
    <property type="match status" value="1"/>
</dbReference>
<dbReference type="NCBIfam" id="NF010177">
    <property type="entry name" value="PRK13656.1"/>
    <property type="match status" value="1"/>
</dbReference>
<dbReference type="PANTHER" id="PTHR37480">
    <property type="entry name" value="ENOYL-[ACYL-CARRIER-PROTEIN] REDUCTASE [NADH]"/>
    <property type="match status" value="1"/>
</dbReference>
<dbReference type="PANTHER" id="PTHR37480:SF1">
    <property type="entry name" value="ENOYL-[ACYL-CARRIER-PROTEIN] REDUCTASE [NADH]"/>
    <property type="match status" value="1"/>
</dbReference>
<dbReference type="Pfam" id="PF07055">
    <property type="entry name" value="Eno-Rase_FAD_bd"/>
    <property type="match status" value="1"/>
</dbReference>
<dbReference type="Pfam" id="PF12242">
    <property type="entry name" value="Eno-Rase_NADH_b"/>
    <property type="match status" value="1"/>
</dbReference>
<dbReference type="Pfam" id="PF12241">
    <property type="entry name" value="Enoyl_reductase"/>
    <property type="match status" value="1"/>
</dbReference>
<dbReference type="SUPFAM" id="SSF51735">
    <property type="entry name" value="NAD(P)-binding Rossmann-fold domains"/>
    <property type="match status" value="1"/>
</dbReference>